<comment type="function">
    <text evidence="1">Cell wall formation.</text>
</comment>
<comment type="catalytic activity">
    <reaction evidence="1">
        <text>UDP-N-acetyl-alpha-D-muramate + NADP(+) = UDP-N-acetyl-3-O-(1-carboxyvinyl)-alpha-D-glucosamine + NADPH + H(+)</text>
        <dbReference type="Rhea" id="RHEA:12248"/>
        <dbReference type="ChEBI" id="CHEBI:15378"/>
        <dbReference type="ChEBI" id="CHEBI:57783"/>
        <dbReference type="ChEBI" id="CHEBI:58349"/>
        <dbReference type="ChEBI" id="CHEBI:68483"/>
        <dbReference type="ChEBI" id="CHEBI:70757"/>
        <dbReference type="EC" id="1.3.1.98"/>
    </reaction>
</comment>
<comment type="cofactor">
    <cofactor evidence="1">
        <name>FAD</name>
        <dbReference type="ChEBI" id="CHEBI:57692"/>
    </cofactor>
</comment>
<comment type="pathway">
    <text evidence="1">Cell wall biogenesis; peptidoglycan biosynthesis.</text>
</comment>
<comment type="subcellular location">
    <subcellularLocation>
        <location evidence="1">Cytoplasm</location>
    </subcellularLocation>
</comment>
<comment type="similarity">
    <text evidence="1">Belongs to the MurB family.</text>
</comment>
<gene>
    <name evidence="1" type="primary">murB</name>
    <name type="ordered locus">LVIS_0681</name>
</gene>
<proteinExistence type="inferred from homology"/>
<feature type="chain" id="PRO_1000002887" description="UDP-N-acetylenolpyruvoylglucosamine reductase">
    <location>
        <begin position="1"/>
        <end position="304"/>
    </location>
</feature>
<feature type="domain" description="FAD-binding PCMH-type" evidence="1">
    <location>
        <begin position="28"/>
        <end position="193"/>
    </location>
</feature>
<feature type="active site" evidence="1">
    <location>
        <position position="172"/>
    </location>
</feature>
<feature type="active site" description="Proton donor" evidence="1">
    <location>
        <position position="222"/>
    </location>
</feature>
<feature type="active site" evidence="1">
    <location>
        <position position="292"/>
    </location>
</feature>
<accession>Q03SJ8</accession>
<organism>
    <name type="scientific">Levilactobacillus brevis (strain ATCC 367 / BCRC 12310 / CIP 105137 / JCM 1170 / LMG 11437 / NCIMB 947 / NCTC 947)</name>
    <name type="common">Lactobacillus brevis</name>
    <dbReference type="NCBI Taxonomy" id="387344"/>
    <lineage>
        <taxon>Bacteria</taxon>
        <taxon>Bacillati</taxon>
        <taxon>Bacillota</taxon>
        <taxon>Bacilli</taxon>
        <taxon>Lactobacillales</taxon>
        <taxon>Lactobacillaceae</taxon>
        <taxon>Levilactobacillus</taxon>
    </lineage>
</organism>
<reference key="1">
    <citation type="journal article" date="2006" name="Proc. Natl. Acad. Sci. U.S.A.">
        <title>Comparative genomics of the lactic acid bacteria.</title>
        <authorList>
            <person name="Makarova K.S."/>
            <person name="Slesarev A."/>
            <person name="Wolf Y.I."/>
            <person name="Sorokin A."/>
            <person name="Mirkin B."/>
            <person name="Koonin E.V."/>
            <person name="Pavlov A."/>
            <person name="Pavlova N."/>
            <person name="Karamychev V."/>
            <person name="Polouchine N."/>
            <person name="Shakhova V."/>
            <person name="Grigoriev I."/>
            <person name="Lou Y."/>
            <person name="Rohksar D."/>
            <person name="Lucas S."/>
            <person name="Huang K."/>
            <person name="Goodstein D.M."/>
            <person name="Hawkins T."/>
            <person name="Plengvidhya V."/>
            <person name="Welker D."/>
            <person name="Hughes J."/>
            <person name="Goh Y."/>
            <person name="Benson A."/>
            <person name="Baldwin K."/>
            <person name="Lee J.-H."/>
            <person name="Diaz-Muniz I."/>
            <person name="Dosti B."/>
            <person name="Smeianov V."/>
            <person name="Wechter W."/>
            <person name="Barabote R."/>
            <person name="Lorca G."/>
            <person name="Altermann E."/>
            <person name="Barrangou R."/>
            <person name="Ganesan B."/>
            <person name="Xie Y."/>
            <person name="Rawsthorne H."/>
            <person name="Tamir D."/>
            <person name="Parker C."/>
            <person name="Breidt F."/>
            <person name="Broadbent J.R."/>
            <person name="Hutkins R."/>
            <person name="O'Sullivan D."/>
            <person name="Steele J."/>
            <person name="Unlu G."/>
            <person name="Saier M.H. Jr."/>
            <person name="Klaenhammer T."/>
            <person name="Richardson P."/>
            <person name="Kozyavkin S."/>
            <person name="Weimer B.C."/>
            <person name="Mills D.A."/>
        </authorList>
    </citation>
    <scope>NUCLEOTIDE SEQUENCE [LARGE SCALE GENOMIC DNA]</scope>
    <source>
        <strain>ATCC 367 / BCRC 12310 / CIP 105137 / JCM 1170 / LMG 11437 / NCIMB 947 / NCTC 947</strain>
    </source>
</reference>
<evidence type="ECO:0000255" key="1">
    <source>
        <dbReference type="HAMAP-Rule" id="MF_00037"/>
    </source>
</evidence>
<name>MURB_LEVBA</name>
<protein>
    <recommendedName>
        <fullName evidence="1">UDP-N-acetylenolpyruvoylglucosamine reductase</fullName>
        <ecNumber evidence="1">1.3.1.98</ecNumber>
    </recommendedName>
    <alternativeName>
        <fullName evidence="1">UDP-N-acetylmuramate dehydrogenase</fullName>
    </alternativeName>
</protein>
<sequence length="304" mass="31984">MMMADIATAFPAIKILRDEPLAHYTHTKTGGPADYLAFPTNVQETKSLLAYANQISLPVTVVGNASNLIVRDGGIRGLVMILTQMAAITTAGNTVTAEAGAALITTTQVAQAHALSGLEFAAGIPGSVGGAIFMNAGAYGGEISTVAVAAEVLTPEGEIRTLNQAELDFGYRHSSIQDYHDIVLTATFALTPGDGAAIQAQMDDLNARRAAKQPLELPSCGSVFKRPVGHYTGQLIQEAGLQGLKWGGAQVSTKHAGFIVNIDHATATDYLELIHHIQAVILEKDGVTLETEVRIIGEEPTTQK</sequence>
<keyword id="KW-0131">Cell cycle</keyword>
<keyword id="KW-0132">Cell division</keyword>
<keyword id="KW-0133">Cell shape</keyword>
<keyword id="KW-0961">Cell wall biogenesis/degradation</keyword>
<keyword id="KW-0963">Cytoplasm</keyword>
<keyword id="KW-0274">FAD</keyword>
<keyword id="KW-0285">Flavoprotein</keyword>
<keyword id="KW-0521">NADP</keyword>
<keyword id="KW-0560">Oxidoreductase</keyword>
<keyword id="KW-0573">Peptidoglycan synthesis</keyword>
<keyword id="KW-1185">Reference proteome</keyword>
<dbReference type="EC" id="1.3.1.98" evidence="1"/>
<dbReference type="EMBL" id="CP000416">
    <property type="protein sequence ID" value="ABJ63824.1"/>
    <property type="molecule type" value="Genomic_DNA"/>
</dbReference>
<dbReference type="RefSeq" id="WP_011667456.1">
    <property type="nucleotide sequence ID" value="NC_008497.1"/>
</dbReference>
<dbReference type="SMR" id="Q03SJ8"/>
<dbReference type="STRING" id="387344.LVIS_0681"/>
<dbReference type="KEGG" id="lbr:LVIS_0681"/>
<dbReference type="eggNOG" id="COG0812">
    <property type="taxonomic scope" value="Bacteria"/>
</dbReference>
<dbReference type="HOGENOM" id="CLU_035304_1_1_9"/>
<dbReference type="UniPathway" id="UPA00219"/>
<dbReference type="Proteomes" id="UP000001652">
    <property type="component" value="Chromosome"/>
</dbReference>
<dbReference type="GO" id="GO:0005829">
    <property type="term" value="C:cytosol"/>
    <property type="evidence" value="ECO:0007669"/>
    <property type="project" value="TreeGrafter"/>
</dbReference>
<dbReference type="GO" id="GO:0071949">
    <property type="term" value="F:FAD binding"/>
    <property type="evidence" value="ECO:0007669"/>
    <property type="project" value="InterPro"/>
</dbReference>
<dbReference type="GO" id="GO:0008762">
    <property type="term" value="F:UDP-N-acetylmuramate dehydrogenase activity"/>
    <property type="evidence" value="ECO:0007669"/>
    <property type="project" value="UniProtKB-UniRule"/>
</dbReference>
<dbReference type="GO" id="GO:0051301">
    <property type="term" value="P:cell division"/>
    <property type="evidence" value="ECO:0007669"/>
    <property type="project" value="UniProtKB-KW"/>
</dbReference>
<dbReference type="GO" id="GO:0071555">
    <property type="term" value="P:cell wall organization"/>
    <property type="evidence" value="ECO:0007669"/>
    <property type="project" value="UniProtKB-KW"/>
</dbReference>
<dbReference type="GO" id="GO:0009252">
    <property type="term" value="P:peptidoglycan biosynthetic process"/>
    <property type="evidence" value="ECO:0007669"/>
    <property type="project" value="UniProtKB-UniRule"/>
</dbReference>
<dbReference type="GO" id="GO:0008360">
    <property type="term" value="P:regulation of cell shape"/>
    <property type="evidence" value="ECO:0007669"/>
    <property type="project" value="UniProtKB-KW"/>
</dbReference>
<dbReference type="Gene3D" id="3.30.465.10">
    <property type="match status" value="1"/>
</dbReference>
<dbReference type="Gene3D" id="3.90.78.10">
    <property type="entry name" value="UDP-N-acetylenolpyruvoylglucosamine reductase, C-terminal domain"/>
    <property type="match status" value="1"/>
</dbReference>
<dbReference type="Gene3D" id="3.30.43.10">
    <property type="entry name" value="Uridine Diphospho-n-acetylenolpyruvylglucosamine Reductase, domain 2"/>
    <property type="match status" value="1"/>
</dbReference>
<dbReference type="HAMAP" id="MF_00037">
    <property type="entry name" value="MurB"/>
    <property type="match status" value="1"/>
</dbReference>
<dbReference type="InterPro" id="IPR016166">
    <property type="entry name" value="FAD-bd_PCMH"/>
</dbReference>
<dbReference type="InterPro" id="IPR036318">
    <property type="entry name" value="FAD-bd_PCMH-like_sf"/>
</dbReference>
<dbReference type="InterPro" id="IPR016167">
    <property type="entry name" value="FAD-bd_PCMH_sub1"/>
</dbReference>
<dbReference type="InterPro" id="IPR016169">
    <property type="entry name" value="FAD-bd_PCMH_sub2"/>
</dbReference>
<dbReference type="InterPro" id="IPR003170">
    <property type="entry name" value="MurB"/>
</dbReference>
<dbReference type="InterPro" id="IPR011601">
    <property type="entry name" value="MurB_C"/>
</dbReference>
<dbReference type="InterPro" id="IPR036635">
    <property type="entry name" value="MurB_C_sf"/>
</dbReference>
<dbReference type="InterPro" id="IPR006094">
    <property type="entry name" value="Oxid_FAD_bind_N"/>
</dbReference>
<dbReference type="NCBIfam" id="TIGR00179">
    <property type="entry name" value="murB"/>
    <property type="match status" value="1"/>
</dbReference>
<dbReference type="NCBIfam" id="NF010480">
    <property type="entry name" value="PRK13905.1"/>
    <property type="match status" value="1"/>
</dbReference>
<dbReference type="PANTHER" id="PTHR21071">
    <property type="entry name" value="UDP-N-ACETYLENOLPYRUVOYLGLUCOSAMINE REDUCTASE"/>
    <property type="match status" value="1"/>
</dbReference>
<dbReference type="PANTHER" id="PTHR21071:SF4">
    <property type="entry name" value="UDP-N-ACETYLENOLPYRUVOYLGLUCOSAMINE REDUCTASE"/>
    <property type="match status" value="1"/>
</dbReference>
<dbReference type="Pfam" id="PF01565">
    <property type="entry name" value="FAD_binding_4"/>
    <property type="match status" value="1"/>
</dbReference>
<dbReference type="Pfam" id="PF02873">
    <property type="entry name" value="MurB_C"/>
    <property type="match status" value="1"/>
</dbReference>
<dbReference type="SUPFAM" id="SSF56176">
    <property type="entry name" value="FAD-binding/transporter-associated domain-like"/>
    <property type="match status" value="1"/>
</dbReference>
<dbReference type="SUPFAM" id="SSF56194">
    <property type="entry name" value="Uridine diphospho-N-Acetylenolpyruvylglucosamine reductase, MurB, C-terminal domain"/>
    <property type="match status" value="1"/>
</dbReference>
<dbReference type="PROSITE" id="PS51387">
    <property type="entry name" value="FAD_PCMH"/>
    <property type="match status" value="1"/>
</dbReference>